<keyword id="KW-0131">Cell cycle</keyword>
<keyword id="KW-0963">Cytoplasm</keyword>
<keyword id="KW-1015">Disulfide bond</keyword>
<keyword id="KW-1017">Isopeptide bond</keyword>
<keyword id="KW-0597">Phosphoprotein</keyword>
<keyword id="KW-1185">Reference proteome</keyword>
<keyword id="KW-0804">Transcription</keyword>
<keyword id="KW-0805">Transcription regulation</keyword>
<keyword id="KW-0043">Tumor suppressor</keyword>
<keyword id="KW-0832">Ubl conjugation</keyword>
<comment type="function">
    <text evidence="1 2">May act as an oxidative stress mediator by inhibiting thioredoxin activity or by limiting its bioavailability (By similarity). Interacts with COPS5 and restores COPS5-induced suppression of CDKN1B stability, blocking the COPS5-mediated translocation of CDKN1B from the nucleus to the cytoplasm (By similarity). Functions as a transcriptional repressor, possibly by acting as a bridge molecule between transcription factors and corepressor complexes, and over-expression will induce G0/G1 cell cycle arrest (By similarity). Required for the maturation of natural killer cells (By similarity). Acts as a suppressor of tumor cell growth. Inhibits the proteasomal degradation of DDIT4, and thereby contributes to the inhibition of the mammalian target of rapamycin complex 1 (mTORC1) (By similarity).</text>
</comment>
<comment type="subunit">
    <text evidence="2">Homodimer; disulfide-linked. Interacts with TXN/thioredoxin through its redox-active site. Interacts with transcriptional repressors ZBTB16, ZBTB32 and HDAC1. Interacts with DDIT4.</text>
</comment>
<comment type="subcellular location">
    <subcellularLocation>
        <location evidence="1">Cytoplasm</location>
    </subcellularLocation>
</comment>
<comment type="PTM">
    <text evidence="2">Ubiquitinated; undergoes heterotypic 'Lys-48'-/'Lys-63'-branched polyubiquitination catalyzed by ITCH and UBR5 resulting in proteasomal degradation. Deubiquitinated by USP5, leading to TXNIP stabilization.</text>
</comment>
<comment type="similarity">
    <text evidence="3">Belongs to the arrestin family.</text>
</comment>
<gene>
    <name type="primary">TXNIP</name>
</gene>
<proteinExistence type="evidence at transcript level"/>
<sequence>MVMFKKIKSFEVVFNDPEKVYGSGEKVAGRVIVEVCEVTRVKAVRILACGVAKVLWMQGSQQCKQTSEYLRYEDTLLLEDQPTGENEMVIMRPGNKYEYKFGFELPQGPLGTSFKGKYGCVDYWVKAFLDRPSQPTQGTKKNFEVVDLVDVNTPDLMAPVSAKKEKKVSCMFIPDGRVSVSARIDRKGFCEGDEISIHADFENTCSRIVVPKAAIVARHTYLANGQTKVLTQELSSVRGNHIISGTCASWRGKSLRVQKIRPSILGCNILRVEYSLLIYVSVPGSKKVILDLPLVIGSRSGLSSRTSSMASRTSSEMSWVDLNIPDTPEAPPCYMDIIPEDHRLESPTTPLLDDMDGSQDSPIFMYAPEFKFMPPPTYTEVDPCILNNNVQ</sequence>
<reference key="1">
    <citation type="submission" date="2004-11" db="EMBL/GenBank/DDBJ databases">
        <authorList>
            <consortium name="The German cDNA consortium"/>
        </authorList>
    </citation>
    <scope>NUCLEOTIDE SEQUENCE [LARGE SCALE MRNA]</scope>
    <source>
        <tissue>Kidney</tissue>
    </source>
</reference>
<dbReference type="EMBL" id="CR859944">
    <property type="protein sequence ID" value="CAH92099.1"/>
    <property type="molecule type" value="mRNA"/>
</dbReference>
<dbReference type="RefSeq" id="NP_001127507.1">
    <property type="nucleotide sequence ID" value="NM_001134035.2"/>
</dbReference>
<dbReference type="SMR" id="Q5R811"/>
<dbReference type="STRING" id="9601.ENSPPYP00000001080"/>
<dbReference type="GeneID" id="100174583"/>
<dbReference type="KEGG" id="pon:100174583"/>
<dbReference type="CTD" id="10628"/>
<dbReference type="eggNOG" id="KOG3780">
    <property type="taxonomic scope" value="Eukaryota"/>
</dbReference>
<dbReference type="InParanoid" id="Q5R811"/>
<dbReference type="OrthoDB" id="2333384at2759"/>
<dbReference type="Proteomes" id="UP000001595">
    <property type="component" value="Unplaced"/>
</dbReference>
<dbReference type="GO" id="GO:0005737">
    <property type="term" value="C:cytoplasm"/>
    <property type="evidence" value="ECO:0007669"/>
    <property type="project" value="UniProtKB-SubCell"/>
</dbReference>
<dbReference type="GO" id="GO:0031625">
    <property type="term" value="F:ubiquitin protein ligase binding"/>
    <property type="evidence" value="ECO:0007669"/>
    <property type="project" value="TreeGrafter"/>
</dbReference>
<dbReference type="GO" id="GO:0071228">
    <property type="term" value="P:cellular response to tumor cell"/>
    <property type="evidence" value="ECO:0000250"/>
    <property type="project" value="UniProtKB"/>
</dbReference>
<dbReference type="GO" id="GO:0051782">
    <property type="term" value="P:negative regulation of cell division"/>
    <property type="evidence" value="ECO:0000250"/>
    <property type="project" value="UniProtKB"/>
</dbReference>
<dbReference type="GO" id="GO:0015031">
    <property type="term" value="P:protein transport"/>
    <property type="evidence" value="ECO:0007669"/>
    <property type="project" value="TreeGrafter"/>
</dbReference>
<dbReference type="FunFam" id="2.60.40.640:FF:000016">
    <property type="entry name" value="thioredoxin-interacting protein-like"/>
    <property type="match status" value="1"/>
</dbReference>
<dbReference type="FunFam" id="2.60.40.640:FF:000017">
    <property type="entry name" value="thioredoxin-interacting protein-like"/>
    <property type="match status" value="1"/>
</dbReference>
<dbReference type="Gene3D" id="2.60.40.640">
    <property type="match status" value="2"/>
</dbReference>
<dbReference type="InterPro" id="IPR014752">
    <property type="entry name" value="Arrestin-like_C"/>
</dbReference>
<dbReference type="InterPro" id="IPR011021">
    <property type="entry name" value="Arrestin-like_N"/>
</dbReference>
<dbReference type="InterPro" id="IPR011022">
    <property type="entry name" value="Arrestin_C-like"/>
</dbReference>
<dbReference type="InterPro" id="IPR050357">
    <property type="entry name" value="Arrestin_domain-protein"/>
</dbReference>
<dbReference type="InterPro" id="IPR014756">
    <property type="entry name" value="Ig_E-set"/>
</dbReference>
<dbReference type="PANTHER" id="PTHR11188">
    <property type="entry name" value="ARRESTIN DOMAIN CONTAINING PROTEIN"/>
    <property type="match status" value="1"/>
</dbReference>
<dbReference type="PANTHER" id="PTHR11188:SF14">
    <property type="entry name" value="THIOREDOXIN-INTERACTING PROTEIN"/>
    <property type="match status" value="1"/>
</dbReference>
<dbReference type="Pfam" id="PF02752">
    <property type="entry name" value="Arrestin_C"/>
    <property type="match status" value="1"/>
</dbReference>
<dbReference type="Pfam" id="PF00339">
    <property type="entry name" value="Arrestin_N"/>
    <property type="match status" value="1"/>
</dbReference>
<dbReference type="SMART" id="SM01017">
    <property type="entry name" value="Arrestin_C"/>
    <property type="match status" value="1"/>
</dbReference>
<dbReference type="SUPFAM" id="SSF81296">
    <property type="entry name" value="E set domains"/>
    <property type="match status" value="2"/>
</dbReference>
<name>TXNIP_PONAB</name>
<feature type="chain" id="PRO_0000250492" description="Thioredoxin-interacting protein">
    <location>
        <begin position="1"/>
        <end position="391"/>
    </location>
</feature>
<feature type="modified residue" description="Phosphoserine" evidence="2">
    <location>
        <position position="361"/>
    </location>
</feature>
<feature type="disulfide bond" description="Interchain" evidence="2">
    <location>
        <position position="63"/>
    </location>
</feature>
<feature type="cross-link" description="Glycyl lysine isopeptide (Lys-Gly) (interchain with G-Cter in ubiquitin)" evidence="2">
    <location>
        <position position="212"/>
    </location>
</feature>
<organism>
    <name type="scientific">Pongo abelii</name>
    <name type="common">Sumatran orangutan</name>
    <name type="synonym">Pongo pygmaeus abelii</name>
    <dbReference type="NCBI Taxonomy" id="9601"/>
    <lineage>
        <taxon>Eukaryota</taxon>
        <taxon>Metazoa</taxon>
        <taxon>Chordata</taxon>
        <taxon>Craniata</taxon>
        <taxon>Vertebrata</taxon>
        <taxon>Euteleostomi</taxon>
        <taxon>Mammalia</taxon>
        <taxon>Eutheria</taxon>
        <taxon>Euarchontoglires</taxon>
        <taxon>Primates</taxon>
        <taxon>Haplorrhini</taxon>
        <taxon>Catarrhini</taxon>
        <taxon>Hominidae</taxon>
        <taxon>Pongo</taxon>
    </lineage>
</organism>
<protein>
    <recommendedName>
        <fullName>Thioredoxin-interacting protein</fullName>
    </recommendedName>
</protein>
<evidence type="ECO:0000250" key="1">
    <source>
        <dbReference type="UniProtKB" id="Q8BG60"/>
    </source>
</evidence>
<evidence type="ECO:0000250" key="2">
    <source>
        <dbReference type="UniProtKB" id="Q9H3M7"/>
    </source>
</evidence>
<evidence type="ECO:0000305" key="3"/>
<accession>Q5R811</accession>